<keyword id="KW-0963">Cytoplasm</keyword>
<keyword id="KW-0275">Fatty acid biosynthesis</keyword>
<keyword id="KW-0276">Fatty acid metabolism</keyword>
<keyword id="KW-0444">Lipid biosynthesis</keyword>
<keyword id="KW-0443">Lipid metabolism</keyword>
<keyword id="KW-0596">Phosphopantetheine</keyword>
<keyword id="KW-0597">Phosphoprotein</keyword>
<name>ACP_RICCK</name>
<reference key="1">
    <citation type="submission" date="2007-09" db="EMBL/GenBank/DDBJ databases">
        <title>Complete genome sequence of Rickettsia canadensis.</title>
        <authorList>
            <person name="Madan A."/>
            <person name="Fahey J."/>
            <person name="Helton E."/>
            <person name="Ketteman M."/>
            <person name="Madan A."/>
            <person name="Rodrigues S."/>
            <person name="Sanchez A."/>
            <person name="Whiting M."/>
            <person name="Dasch G."/>
            <person name="Eremeeva M."/>
        </authorList>
    </citation>
    <scope>NUCLEOTIDE SEQUENCE [LARGE SCALE GENOMIC DNA]</scope>
    <source>
        <strain>McKiel</strain>
    </source>
</reference>
<evidence type="ECO:0000255" key="1">
    <source>
        <dbReference type="HAMAP-Rule" id="MF_01217"/>
    </source>
</evidence>
<evidence type="ECO:0000255" key="2">
    <source>
        <dbReference type="PROSITE-ProRule" id="PRU00258"/>
    </source>
</evidence>
<organism>
    <name type="scientific">Rickettsia canadensis (strain McKiel)</name>
    <dbReference type="NCBI Taxonomy" id="293613"/>
    <lineage>
        <taxon>Bacteria</taxon>
        <taxon>Pseudomonadati</taxon>
        <taxon>Pseudomonadota</taxon>
        <taxon>Alphaproteobacteria</taxon>
        <taxon>Rickettsiales</taxon>
        <taxon>Rickettsiaceae</taxon>
        <taxon>Rickettsieae</taxon>
        <taxon>Rickettsia</taxon>
        <taxon>belli group</taxon>
    </lineage>
</organism>
<accession>A8EZW3</accession>
<protein>
    <recommendedName>
        <fullName evidence="1">Acyl carrier protein</fullName>
        <shortName evidence="1">ACP</shortName>
    </recommendedName>
</protein>
<feature type="chain" id="PRO_1000066680" description="Acyl carrier protein">
    <location>
        <begin position="1"/>
        <end position="86"/>
    </location>
</feature>
<feature type="domain" description="Carrier" evidence="2">
    <location>
        <begin position="10"/>
        <end position="85"/>
    </location>
</feature>
<feature type="modified residue" description="O-(pantetheine 4'-phosphoryl)serine" evidence="2">
    <location>
        <position position="45"/>
    </location>
</feature>
<proteinExistence type="inferred from homology"/>
<sequence length="86" mass="9903">MEFKIMSTTDKIEQKVIEMVAEKLNKDKSIITTDSRFIEDLKADSLDTVELMMAIEVEYGIDIPDDEATKIKTVSDVIQYIKERQS</sequence>
<comment type="function">
    <text evidence="1">Carrier of the growing fatty acid chain in fatty acid biosynthesis.</text>
</comment>
<comment type="pathway">
    <text evidence="1">Lipid metabolism; fatty acid biosynthesis.</text>
</comment>
<comment type="subcellular location">
    <subcellularLocation>
        <location evidence="1">Cytoplasm</location>
    </subcellularLocation>
</comment>
<comment type="PTM">
    <text evidence="1">4'-phosphopantetheine is transferred from CoA to a specific serine of apo-ACP by AcpS. This modification is essential for activity because fatty acids are bound in thioester linkage to the sulfhydryl of the prosthetic group.</text>
</comment>
<comment type="similarity">
    <text evidence="1">Belongs to the acyl carrier protein (ACP) family.</text>
</comment>
<gene>
    <name evidence="1" type="primary">acpP</name>
    <name type="ordered locus">A1E_04875</name>
</gene>
<dbReference type="EMBL" id="CP000409">
    <property type="protein sequence ID" value="ABV73896.1"/>
    <property type="molecule type" value="Genomic_DNA"/>
</dbReference>
<dbReference type="BMRB" id="A8EZW3"/>
<dbReference type="SMR" id="A8EZW3"/>
<dbReference type="STRING" id="293613.A1E_04875"/>
<dbReference type="KEGG" id="rcm:A1E_04875"/>
<dbReference type="eggNOG" id="COG0236">
    <property type="taxonomic scope" value="Bacteria"/>
</dbReference>
<dbReference type="HOGENOM" id="CLU_108696_5_6_5"/>
<dbReference type="UniPathway" id="UPA00094"/>
<dbReference type="Proteomes" id="UP000007056">
    <property type="component" value="Chromosome"/>
</dbReference>
<dbReference type="GO" id="GO:0005829">
    <property type="term" value="C:cytosol"/>
    <property type="evidence" value="ECO:0007669"/>
    <property type="project" value="TreeGrafter"/>
</dbReference>
<dbReference type="GO" id="GO:0016020">
    <property type="term" value="C:membrane"/>
    <property type="evidence" value="ECO:0007669"/>
    <property type="project" value="GOC"/>
</dbReference>
<dbReference type="GO" id="GO:0000035">
    <property type="term" value="F:acyl binding"/>
    <property type="evidence" value="ECO:0007669"/>
    <property type="project" value="TreeGrafter"/>
</dbReference>
<dbReference type="GO" id="GO:0000036">
    <property type="term" value="F:acyl carrier activity"/>
    <property type="evidence" value="ECO:0007669"/>
    <property type="project" value="UniProtKB-UniRule"/>
</dbReference>
<dbReference type="GO" id="GO:0009245">
    <property type="term" value="P:lipid A biosynthetic process"/>
    <property type="evidence" value="ECO:0007669"/>
    <property type="project" value="TreeGrafter"/>
</dbReference>
<dbReference type="Gene3D" id="1.10.1200.10">
    <property type="entry name" value="ACP-like"/>
    <property type="match status" value="1"/>
</dbReference>
<dbReference type="HAMAP" id="MF_01217">
    <property type="entry name" value="Acyl_carrier"/>
    <property type="match status" value="1"/>
</dbReference>
<dbReference type="InterPro" id="IPR003231">
    <property type="entry name" value="ACP"/>
</dbReference>
<dbReference type="InterPro" id="IPR036736">
    <property type="entry name" value="ACP-like_sf"/>
</dbReference>
<dbReference type="InterPro" id="IPR009081">
    <property type="entry name" value="PP-bd_ACP"/>
</dbReference>
<dbReference type="NCBIfam" id="TIGR00517">
    <property type="entry name" value="acyl_carrier"/>
    <property type="match status" value="1"/>
</dbReference>
<dbReference type="NCBIfam" id="NF002148">
    <property type="entry name" value="PRK00982.1-2"/>
    <property type="match status" value="1"/>
</dbReference>
<dbReference type="NCBIfam" id="NF002150">
    <property type="entry name" value="PRK00982.1-4"/>
    <property type="match status" value="1"/>
</dbReference>
<dbReference type="PANTHER" id="PTHR20863">
    <property type="entry name" value="ACYL CARRIER PROTEIN"/>
    <property type="match status" value="1"/>
</dbReference>
<dbReference type="PANTHER" id="PTHR20863:SF76">
    <property type="entry name" value="CARRIER DOMAIN-CONTAINING PROTEIN"/>
    <property type="match status" value="1"/>
</dbReference>
<dbReference type="Pfam" id="PF00550">
    <property type="entry name" value="PP-binding"/>
    <property type="match status" value="1"/>
</dbReference>
<dbReference type="SUPFAM" id="SSF47336">
    <property type="entry name" value="ACP-like"/>
    <property type="match status" value="1"/>
</dbReference>
<dbReference type="PROSITE" id="PS50075">
    <property type="entry name" value="CARRIER"/>
    <property type="match status" value="1"/>
</dbReference>